<name>MCSB_CLOK5</name>
<protein>
    <recommendedName>
        <fullName evidence="1">Protein-arginine kinase</fullName>
        <ecNumber evidence="1">2.7.14.1</ecNumber>
    </recommendedName>
</protein>
<dbReference type="EC" id="2.7.14.1" evidence="1"/>
<dbReference type="EMBL" id="CP000673">
    <property type="protein sequence ID" value="EDK32250.1"/>
    <property type="molecule type" value="Genomic_DNA"/>
</dbReference>
<dbReference type="RefSeq" id="WP_011988776.1">
    <property type="nucleotide sequence ID" value="NC_009706.1"/>
</dbReference>
<dbReference type="SMR" id="A5N4L9"/>
<dbReference type="STRING" id="431943.CKL_0194"/>
<dbReference type="KEGG" id="ckl:CKL_0194"/>
<dbReference type="eggNOG" id="COG3869">
    <property type="taxonomic scope" value="Bacteria"/>
</dbReference>
<dbReference type="HOGENOM" id="CLU_066591_1_0_9"/>
<dbReference type="Proteomes" id="UP000002411">
    <property type="component" value="Chromosome"/>
</dbReference>
<dbReference type="GO" id="GO:0005615">
    <property type="term" value="C:extracellular space"/>
    <property type="evidence" value="ECO:0007669"/>
    <property type="project" value="TreeGrafter"/>
</dbReference>
<dbReference type="GO" id="GO:0005524">
    <property type="term" value="F:ATP binding"/>
    <property type="evidence" value="ECO:0007669"/>
    <property type="project" value="UniProtKB-KW"/>
</dbReference>
<dbReference type="GO" id="GO:0004111">
    <property type="term" value="F:creatine kinase activity"/>
    <property type="evidence" value="ECO:0007669"/>
    <property type="project" value="InterPro"/>
</dbReference>
<dbReference type="GO" id="GO:0004672">
    <property type="term" value="F:protein kinase activity"/>
    <property type="evidence" value="ECO:0007669"/>
    <property type="project" value="UniProtKB-UniRule"/>
</dbReference>
<dbReference type="GO" id="GO:0046314">
    <property type="term" value="P:phosphocreatine biosynthetic process"/>
    <property type="evidence" value="ECO:0007669"/>
    <property type="project" value="InterPro"/>
</dbReference>
<dbReference type="CDD" id="cd07930">
    <property type="entry name" value="bacterial_phosphagen_kinase"/>
    <property type="match status" value="1"/>
</dbReference>
<dbReference type="Gene3D" id="3.30.590.10">
    <property type="entry name" value="Glutamine synthetase/guanido kinase, catalytic domain"/>
    <property type="match status" value="1"/>
</dbReference>
<dbReference type="HAMAP" id="MF_00602">
    <property type="entry name" value="Prot_Arg_kinase"/>
    <property type="match status" value="1"/>
</dbReference>
<dbReference type="InterPro" id="IPR023660">
    <property type="entry name" value="Arg_Kinase"/>
</dbReference>
<dbReference type="InterPro" id="IPR000749">
    <property type="entry name" value="ATP-guanido_PTrfase"/>
</dbReference>
<dbReference type="InterPro" id="IPR022415">
    <property type="entry name" value="ATP-guanido_PTrfase_AS"/>
</dbReference>
<dbReference type="InterPro" id="IPR022414">
    <property type="entry name" value="ATP-guanido_PTrfase_cat"/>
</dbReference>
<dbReference type="InterPro" id="IPR014746">
    <property type="entry name" value="Gln_synth/guanido_kin_cat_dom"/>
</dbReference>
<dbReference type="NCBIfam" id="NF002194">
    <property type="entry name" value="PRK01059.1-4"/>
    <property type="match status" value="1"/>
</dbReference>
<dbReference type="PANTHER" id="PTHR11547:SF38">
    <property type="entry name" value="ARGININE KINASE 1-RELATED"/>
    <property type="match status" value="1"/>
</dbReference>
<dbReference type="PANTHER" id="PTHR11547">
    <property type="entry name" value="ARGININE OR CREATINE KINASE"/>
    <property type="match status" value="1"/>
</dbReference>
<dbReference type="Pfam" id="PF00217">
    <property type="entry name" value="ATP-gua_Ptrans"/>
    <property type="match status" value="1"/>
</dbReference>
<dbReference type="SUPFAM" id="SSF55931">
    <property type="entry name" value="Glutamine synthetase/guanido kinase"/>
    <property type="match status" value="1"/>
</dbReference>
<dbReference type="PROSITE" id="PS00112">
    <property type="entry name" value="PHOSPHAGEN_KINASE"/>
    <property type="match status" value="1"/>
</dbReference>
<dbReference type="PROSITE" id="PS51510">
    <property type="entry name" value="PHOSPHAGEN_KINASE_C"/>
    <property type="match status" value="1"/>
</dbReference>
<sequence length="345" mass="39135">MNNWVTTYENHNYGLVISSRIRLARNLAKIPFSHKLNIEESKKVIKNVENAFYTFSNTEEKFKSNYLWDKNDNEKNIYLEKHLISKNLIDNSSKAAFILDDKETISIMINEEDHVRIQCITGGLNLEEVYDVSEKIDDLLEENLEYAFDEKLGYLTACPTNVGTGLRASVMLHLPSLSLNNQINGFLNALAQVGMTIRGLYGEGSKAIGNIYQISNQVTLGRSEEEILSNLKALVLQIINQEIISRENLMKKYKYELEDKIYRALGVLKSAVLLNSSECLKLLSDVRLGVEMGIIKDVNGITLNKLLVESQPATIQKIYGESLSNKDRDFNRAKFVREKLAVNTA</sequence>
<comment type="function">
    <text evidence="1">Catalyzes the specific phosphorylation of arginine residues in proteins.</text>
</comment>
<comment type="catalytic activity">
    <reaction evidence="1">
        <text>L-arginyl-[protein] + ATP = N(omega)-phospho-L-arginyl-[protein] + ADP + H(+)</text>
        <dbReference type="Rhea" id="RHEA:43384"/>
        <dbReference type="Rhea" id="RHEA-COMP:10532"/>
        <dbReference type="Rhea" id="RHEA-COMP:10533"/>
        <dbReference type="ChEBI" id="CHEBI:15378"/>
        <dbReference type="ChEBI" id="CHEBI:29965"/>
        <dbReference type="ChEBI" id="CHEBI:30616"/>
        <dbReference type="ChEBI" id="CHEBI:83226"/>
        <dbReference type="ChEBI" id="CHEBI:456216"/>
        <dbReference type="EC" id="2.7.14.1"/>
    </reaction>
</comment>
<comment type="activity regulation">
    <text evidence="1">Appears to be allosterically activated by the binding of pArg-containing polypeptides to the pArg-binding pocket localized in the C-terminal domain of McsB.</text>
</comment>
<comment type="similarity">
    <text evidence="1">Belongs to the ATP:guanido phosphotransferase family.</text>
</comment>
<reference key="1">
    <citation type="journal article" date="2008" name="Proc. Natl. Acad. Sci. U.S.A.">
        <title>The genome of Clostridium kluyveri, a strict anaerobe with unique metabolic features.</title>
        <authorList>
            <person name="Seedorf H."/>
            <person name="Fricke W.F."/>
            <person name="Veith B."/>
            <person name="Brueggemann H."/>
            <person name="Liesegang H."/>
            <person name="Strittmatter A."/>
            <person name="Miethke M."/>
            <person name="Buckel W."/>
            <person name="Hinderberger J."/>
            <person name="Li F."/>
            <person name="Hagemeier C."/>
            <person name="Thauer R.K."/>
            <person name="Gottschalk G."/>
        </authorList>
    </citation>
    <scope>NUCLEOTIDE SEQUENCE [LARGE SCALE GENOMIC DNA]</scope>
    <source>
        <strain>ATCC 8527 / DSM 555 / NBRC 12016 / NCIMB 10680 / K1</strain>
    </source>
</reference>
<organism>
    <name type="scientific">Clostridium kluyveri (strain ATCC 8527 / DSM 555 / NBRC 12016 / NCIMB 10680 / K1)</name>
    <dbReference type="NCBI Taxonomy" id="431943"/>
    <lineage>
        <taxon>Bacteria</taxon>
        <taxon>Bacillati</taxon>
        <taxon>Bacillota</taxon>
        <taxon>Clostridia</taxon>
        <taxon>Eubacteriales</taxon>
        <taxon>Clostridiaceae</taxon>
        <taxon>Clostridium</taxon>
    </lineage>
</organism>
<evidence type="ECO:0000255" key="1">
    <source>
        <dbReference type="HAMAP-Rule" id="MF_00602"/>
    </source>
</evidence>
<keyword id="KW-0021">Allosteric enzyme</keyword>
<keyword id="KW-0067">ATP-binding</keyword>
<keyword id="KW-0418">Kinase</keyword>
<keyword id="KW-0547">Nucleotide-binding</keyword>
<keyword id="KW-1185">Reference proteome</keyword>
<keyword id="KW-0808">Transferase</keyword>
<feature type="chain" id="PRO_1000082502" description="Protein-arginine kinase">
    <location>
        <begin position="1"/>
        <end position="345"/>
    </location>
</feature>
<feature type="domain" description="Phosphagen kinase C-terminal" evidence="1">
    <location>
        <begin position="15"/>
        <end position="245"/>
    </location>
</feature>
<feature type="short sequence motif" description="RDXXRA motif of the pArg binding pocket involved in allosteric regulation" evidence="1">
    <location>
        <begin position="328"/>
        <end position="333"/>
    </location>
</feature>
<feature type="binding site" evidence="1">
    <location>
        <begin position="18"/>
        <end position="22"/>
    </location>
    <ligand>
        <name>ATP</name>
        <dbReference type="ChEBI" id="CHEBI:30616"/>
    </ligand>
</feature>
<feature type="binding site" evidence="1">
    <location>
        <position position="82"/>
    </location>
    <ligand>
        <name>ATP</name>
        <dbReference type="ChEBI" id="CHEBI:30616"/>
    </ligand>
</feature>
<feature type="binding site" evidence="1">
    <location>
        <position position="116"/>
    </location>
    <ligand>
        <name>ATP</name>
        <dbReference type="ChEBI" id="CHEBI:30616"/>
    </ligand>
</feature>
<feature type="binding site" evidence="1">
    <location>
        <begin position="167"/>
        <end position="171"/>
    </location>
    <ligand>
        <name>ATP</name>
        <dbReference type="ChEBI" id="CHEBI:30616"/>
    </ligand>
</feature>
<feature type="binding site" evidence="1">
    <location>
        <begin position="198"/>
        <end position="203"/>
    </location>
    <ligand>
        <name>ATP</name>
        <dbReference type="ChEBI" id="CHEBI:30616"/>
    </ligand>
</feature>
<gene>
    <name evidence="1" type="primary">mcsB</name>
    <name type="ordered locus">CKL_0194</name>
</gene>
<proteinExistence type="inferred from homology"/>
<accession>A5N4L9</accession>